<organism>
    <name type="scientific">Xanthomonas campestris pv. campestris (strain B100)</name>
    <dbReference type="NCBI Taxonomy" id="509169"/>
    <lineage>
        <taxon>Bacteria</taxon>
        <taxon>Pseudomonadati</taxon>
        <taxon>Pseudomonadota</taxon>
        <taxon>Gammaproteobacteria</taxon>
        <taxon>Lysobacterales</taxon>
        <taxon>Lysobacteraceae</taxon>
        <taxon>Xanthomonas</taxon>
    </lineage>
</organism>
<comment type="function">
    <text evidence="1">Activates KDO (a required 8-carbon sugar) for incorporation into bacterial lipopolysaccharide in Gram-negative bacteria.</text>
</comment>
<comment type="catalytic activity">
    <reaction evidence="1">
        <text>3-deoxy-alpha-D-manno-oct-2-ulosonate + CTP = CMP-3-deoxy-beta-D-manno-octulosonate + diphosphate</text>
        <dbReference type="Rhea" id="RHEA:23448"/>
        <dbReference type="ChEBI" id="CHEBI:33019"/>
        <dbReference type="ChEBI" id="CHEBI:37563"/>
        <dbReference type="ChEBI" id="CHEBI:85986"/>
        <dbReference type="ChEBI" id="CHEBI:85987"/>
        <dbReference type="EC" id="2.7.7.38"/>
    </reaction>
</comment>
<comment type="pathway">
    <text evidence="1">Nucleotide-sugar biosynthesis; CMP-3-deoxy-D-manno-octulosonate biosynthesis; CMP-3-deoxy-D-manno-octulosonate from 3-deoxy-D-manno-octulosonate and CTP: step 1/1.</text>
</comment>
<comment type="pathway">
    <text evidence="1">Bacterial outer membrane biogenesis; lipopolysaccharide biosynthesis.</text>
</comment>
<comment type="subcellular location">
    <subcellularLocation>
        <location evidence="1">Cytoplasm</location>
    </subcellularLocation>
</comment>
<comment type="similarity">
    <text evidence="1">Belongs to the KdsB family.</text>
</comment>
<proteinExistence type="inferred from homology"/>
<feature type="chain" id="PRO_0000370172" description="3-deoxy-manno-octulosonate cytidylyltransferase">
    <location>
        <begin position="1"/>
        <end position="281"/>
    </location>
</feature>
<dbReference type="EC" id="2.7.7.38" evidence="1"/>
<dbReference type="EMBL" id="AM920689">
    <property type="protein sequence ID" value="CAP51415.1"/>
    <property type="molecule type" value="Genomic_DNA"/>
</dbReference>
<dbReference type="SMR" id="B0RSI0"/>
<dbReference type="KEGG" id="xca:xcc-b100_2062"/>
<dbReference type="HOGENOM" id="CLU_065038_1_0_6"/>
<dbReference type="UniPathway" id="UPA00030"/>
<dbReference type="UniPathway" id="UPA00358">
    <property type="reaction ID" value="UER00476"/>
</dbReference>
<dbReference type="Proteomes" id="UP000001188">
    <property type="component" value="Chromosome"/>
</dbReference>
<dbReference type="GO" id="GO:0005829">
    <property type="term" value="C:cytosol"/>
    <property type="evidence" value="ECO:0007669"/>
    <property type="project" value="TreeGrafter"/>
</dbReference>
<dbReference type="GO" id="GO:0008690">
    <property type="term" value="F:3-deoxy-manno-octulosonate cytidylyltransferase activity"/>
    <property type="evidence" value="ECO:0007669"/>
    <property type="project" value="UniProtKB-UniRule"/>
</dbReference>
<dbReference type="GO" id="GO:0033468">
    <property type="term" value="P:CMP-keto-3-deoxy-D-manno-octulosonic acid biosynthetic process"/>
    <property type="evidence" value="ECO:0007669"/>
    <property type="project" value="UniProtKB-UniRule"/>
</dbReference>
<dbReference type="GO" id="GO:0009103">
    <property type="term" value="P:lipopolysaccharide biosynthetic process"/>
    <property type="evidence" value="ECO:0007669"/>
    <property type="project" value="UniProtKB-UniRule"/>
</dbReference>
<dbReference type="CDD" id="cd02517">
    <property type="entry name" value="CMP-KDO-Synthetase"/>
    <property type="match status" value="1"/>
</dbReference>
<dbReference type="FunFam" id="3.90.550.10:FF:000011">
    <property type="entry name" value="3-deoxy-manno-octulosonate cytidylyltransferase"/>
    <property type="match status" value="1"/>
</dbReference>
<dbReference type="Gene3D" id="3.90.550.10">
    <property type="entry name" value="Spore Coat Polysaccharide Biosynthesis Protein SpsA, Chain A"/>
    <property type="match status" value="1"/>
</dbReference>
<dbReference type="HAMAP" id="MF_00057">
    <property type="entry name" value="KdsB"/>
    <property type="match status" value="1"/>
</dbReference>
<dbReference type="InterPro" id="IPR003329">
    <property type="entry name" value="Cytidylyl_trans"/>
</dbReference>
<dbReference type="InterPro" id="IPR004528">
    <property type="entry name" value="KdsB"/>
</dbReference>
<dbReference type="InterPro" id="IPR029044">
    <property type="entry name" value="Nucleotide-diphossugar_trans"/>
</dbReference>
<dbReference type="NCBIfam" id="TIGR00466">
    <property type="entry name" value="kdsB"/>
    <property type="match status" value="1"/>
</dbReference>
<dbReference type="NCBIfam" id="NF003952">
    <property type="entry name" value="PRK05450.1-5"/>
    <property type="match status" value="1"/>
</dbReference>
<dbReference type="NCBIfam" id="NF009905">
    <property type="entry name" value="PRK13368.1"/>
    <property type="match status" value="1"/>
</dbReference>
<dbReference type="PANTHER" id="PTHR42866">
    <property type="entry name" value="3-DEOXY-MANNO-OCTULOSONATE CYTIDYLYLTRANSFERASE"/>
    <property type="match status" value="1"/>
</dbReference>
<dbReference type="PANTHER" id="PTHR42866:SF2">
    <property type="entry name" value="3-DEOXY-MANNO-OCTULOSONATE CYTIDYLYLTRANSFERASE, MITOCHONDRIAL"/>
    <property type="match status" value="1"/>
</dbReference>
<dbReference type="Pfam" id="PF02348">
    <property type="entry name" value="CTP_transf_3"/>
    <property type="match status" value="1"/>
</dbReference>
<dbReference type="SUPFAM" id="SSF53448">
    <property type="entry name" value="Nucleotide-diphospho-sugar transferases"/>
    <property type="match status" value="1"/>
</dbReference>
<evidence type="ECO:0000255" key="1">
    <source>
        <dbReference type="HAMAP-Rule" id="MF_00057"/>
    </source>
</evidence>
<name>KDSB_XANCB</name>
<keyword id="KW-0963">Cytoplasm</keyword>
<keyword id="KW-0448">Lipopolysaccharide biosynthesis</keyword>
<keyword id="KW-0548">Nucleotidyltransferase</keyword>
<keyword id="KW-0808">Transferase</keyword>
<protein>
    <recommendedName>
        <fullName evidence="1">3-deoxy-manno-octulosonate cytidylyltransferase</fullName>
        <ecNumber evidence="1">2.7.7.38</ecNumber>
    </recommendedName>
    <alternativeName>
        <fullName evidence="1">CMP-2-keto-3-deoxyoctulosonic acid synthase</fullName>
        <shortName evidence="1">CKS</shortName>
        <shortName evidence="1">CMP-KDO synthase</shortName>
    </alternativeName>
</protein>
<gene>
    <name evidence="1" type="primary">kdsB</name>
    <name type="ordered locus">xcc-b100_2062</name>
</gene>
<sequence length="281" mass="29902">MQPPSFSTSEDTVQPVSAASPIASDDASSAFVVAVPARYASTRLPGKPLQLIGDRPMIQHVADRALAAGAREVWVATDDARIAEAIQGLAGVRVAMTSSVHLSGTDRLAECARIAGWDAATCVVNLQGDEPFAPAAGIRAVAQVLQRSGAEMATLAAPVDSAHDLFDPNVVKLVRNAHGDALYFSRAPIPWHRDSFAGQRDAVPAGNHWLRHIGIYAYRAGFLQQFAAMPPGTLERIESLEQLRVLEAGYRIAVALTPEQFPPGIDTPEDLQRAQAQLASA</sequence>
<accession>B0RSI0</accession>
<reference key="1">
    <citation type="journal article" date="2008" name="J. Biotechnol.">
        <title>The genome of Xanthomonas campestris pv. campestris B100 and its use for the reconstruction of metabolic pathways involved in xanthan biosynthesis.</title>
        <authorList>
            <person name="Vorhoelter F.-J."/>
            <person name="Schneiker S."/>
            <person name="Goesmann A."/>
            <person name="Krause L."/>
            <person name="Bekel T."/>
            <person name="Kaiser O."/>
            <person name="Linke B."/>
            <person name="Patschkowski T."/>
            <person name="Rueckert C."/>
            <person name="Schmid J."/>
            <person name="Sidhu V.K."/>
            <person name="Sieber V."/>
            <person name="Tauch A."/>
            <person name="Watt S.A."/>
            <person name="Weisshaar B."/>
            <person name="Becker A."/>
            <person name="Niehaus K."/>
            <person name="Puehler A."/>
        </authorList>
    </citation>
    <scope>NUCLEOTIDE SEQUENCE [LARGE SCALE GENOMIC DNA]</scope>
    <source>
        <strain>B100</strain>
    </source>
</reference>